<accession>Q8VJU4</accession>
<reference key="1">
    <citation type="journal article" date="2002" name="J. Bacteriol.">
        <title>Whole-genome comparison of Mycobacterium tuberculosis clinical and laboratory strains.</title>
        <authorList>
            <person name="Fleischmann R.D."/>
            <person name="Alland D."/>
            <person name="Eisen J.A."/>
            <person name="Carpenter L."/>
            <person name="White O."/>
            <person name="Peterson J.D."/>
            <person name="DeBoy R.T."/>
            <person name="Dodson R.J."/>
            <person name="Gwinn M.L."/>
            <person name="Haft D.H."/>
            <person name="Hickey E.K."/>
            <person name="Kolonay J.F."/>
            <person name="Nelson W.C."/>
            <person name="Umayam L.A."/>
            <person name="Ermolaeva M.D."/>
            <person name="Salzberg S.L."/>
            <person name="Delcher A."/>
            <person name="Utterback T.R."/>
            <person name="Weidman J.F."/>
            <person name="Khouri H.M."/>
            <person name="Gill J."/>
            <person name="Mikula A."/>
            <person name="Bishai W."/>
            <person name="Jacobs W.R. Jr."/>
            <person name="Venter J.C."/>
            <person name="Fraser C.M."/>
        </authorList>
    </citation>
    <scope>NUCLEOTIDE SEQUENCE [LARGE SCALE GENOMIC DNA]</scope>
    <source>
        <strain>CDC 1551 / Oshkosh</strain>
    </source>
</reference>
<reference key="2">
    <citation type="journal article" date="1999" name="J. Bacteriol.">
        <title>Characterization of activity and expression of isocitrate lyase in Mycobacterium avium and Mycobacterium tuberculosis.</title>
        <authorList>
            <person name="Honer Zu Bentrup K."/>
            <person name="Miczak A."/>
            <person name="Swenson D.L."/>
            <person name="Russell D.G."/>
        </authorList>
    </citation>
    <scope>FUNCTION</scope>
    <scope>CATALYTIC ACTIVITY</scope>
    <scope>BIOPHYSICOCHEMICAL PROPERTIES</scope>
    <scope>ACTIVITY REGULATION</scope>
    <scope>INDUCTION</scope>
    <source>
        <strain>CDC 1551 / Oshkosh</strain>
    </source>
</reference>
<reference key="3">
    <citation type="journal article" date="2005" name="Nat. Med.">
        <title>Mycobacterium tuberculosis isocitrate lyases 1 and 2 are jointly required for in vivo growth and virulence.</title>
        <authorList>
            <person name="Munoz-Elias E.J."/>
            <person name="McKinney J.D."/>
        </authorList>
    </citation>
    <scope>FUNCTION</scope>
    <scope>DISRUPTION PHENOTYPE</scope>
    <scope>ACTIVITY REGULATION</scope>
</reference>
<reference key="4">
    <citation type="journal article" date="2006" name="Mol. Microbiol.">
        <title>Dual role of isocitrate lyase 1 in the glyoxylate and methylcitrate cycles in Mycobacterium tuberculosis.</title>
        <authorList>
            <person name="Gould T.A."/>
            <person name="van de Langemheen H."/>
            <person name="Munoz-Elias E.J."/>
            <person name="McKinney J.D."/>
            <person name="Sacchettini J.C."/>
        </authorList>
    </citation>
    <scope>FUNCTION</scope>
    <scope>CATALYTIC ACTIVITY</scope>
    <scope>BIOPHYSICOCHEMICAL PROPERTIES</scope>
</reference>
<proteinExistence type="evidence at protein level"/>
<evidence type="ECO:0000250" key="1">
    <source>
        <dbReference type="UniProtKB" id="P9WKK7"/>
    </source>
</evidence>
<evidence type="ECO:0000269" key="2">
    <source>
    </source>
</evidence>
<evidence type="ECO:0000269" key="3">
    <source>
    </source>
</evidence>
<evidence type="ECO:0000269" key="4">
    <source>
    </source>
</evidence>
<evidence type="ECO:0000303" key="5">
    <source>
    </source>
</evidence>
<evidence type="ECO:0000305" key="6"/>
<evidence type="ECO:0000305" key="7">
    <source>
    </source>
</evidence>
<evidence type="ECO:0007829" key="8">
    <source>
        <dbReference type="PDB" id="6EDW"/>
    </source>
</evidence>
<evidence type="ECO:0007829" key="9">
    <source>
        <dbReference type="PDB" id="6EDZ"/>
    </source>
</evidence>
<evidence type="ECO:0007829" key="10">
    <source>
        <dbReference type="PDB" id="6EE1"/>
    </source>
</evidence>
<feature type="chain" id="PRO_0000432568" description="Isocitrate lyase 2">
    <location>
        <begin position="1"/>
        <end position="766"/>
    </location>
</feature>
<feature type="active site" description="Proton acceptor" evidence="1">
    <location>
        <position position="215"/>
    </location>
</feature>
<feature type="binding site" evidence="1">
    <location>
        <begin position="106"/>
        <end position="108"/>
    </location>
    <ligand>
        <name>substrate</name>
    </ligand>
</feature>
<feature type="binding site" evidence="1">
    <location>
        <position position="177"/>
    </location>
    <ligand>
        <name>Mg(2+)</name>
        <dbReference type="ChEBI" id="CHEBI:18420"/>
    </ligand>
</feature>
<feature type="binding site" evidence="1">
    <location>
        <begin position="216"/>
        <end position="217"/>
    </location>
    <ligand>
        <name>substrate</name>
    </ligand>
</feature>
<feature type="binding site" evidence="1">
    <location>
        <position position="252"/>
    </location>
    <ligand>
        <name>substrate</name>
    </ligand>
</feature>
<feature type="binding site" evidence="1">
    <location>
        <begin position="487"/>
        <end position="491"/>
    </location>
    <ligand>
        <name>substrate</name>
    </ligand>
</feature>
<feature type="binding site" evidence="1">
    <location>
        <position position="522"/>
    </location>
    <ligand>
        <name>substrate</name>
    </ligand>
</feature>
<feature type="helix" evidence="8">
    <location>
        <begin position="13"/>
        <end position="30"/>
    </location>
</feature>
<feature type="helix" evidence="8">
    <location>
        <begin position="32"/>
        <end position="34"/>
    </location>
</feature>
<feature type="helix" evidence="8">
    <location>
        <begin position="43"/>
        <end position="47"/>
    </location>
</feature>
<feature type="helix" evidence="8">
    <location>
        <begin position="58"/>
        <end position="76"/>
    </location>
</feature>
<feature type="strand" evidence="8">
    <location>
        <begin position="81"/>
        <end position="84"/>
    </location>
</feature>
<feature type="helix" evidence="8">
    <location>
        <begin position="89"/>
        <end position="97"/>
    </location>
</feature>
<feature type="strand" evidence="8">
    <location>
        <begin position="103"/>
        <end position="105"/>
    </location>
</feature>
<feature type="helix" evidence="8">
    <location>
        <begin position="107"/>
        <end position="113"/>
    </location>
</feature>
<feature type="strand" evidence="8">
    <location>
        <begin position="116"/>
        <end position="118"/>
    </location>
</feature>
<feature type="helix" evidence="8">
    <location>
        <begin position="131"/>
        <end position="155"/>
    </location>
</feature>
<feature type="helix" evidence="8">
    <location>
        <begin position="159"/>
        <end position="164"/>
    </location>
</feature>
<feature type="strand" evidence="8">
    <location>
        <begin position="174"/>
        <end position="177"/>
    </location>
</feature>
<feature type="strand" evidence="8">
    <location>
        <begin position="182"/>
        <end position="184"/>
    </location>
</feature>
<feature type="helix" evidence="8">
    <location>
        <begin position="185"/>
        <end position="197"/>
    </location>
</feature>
<feature type="strand" evidence="8">
    <location>
        <begin position="202"/>
        <end position="208"/>
    </location>
</feature>
<feature type="helix" evidence="10">
    <location>
        <begin position="210"/>
        <end position="212"/>
    </location>
</feature>
<feature type="helix" evidence="8">
    <location>
        <begin position="226"/>
        <end position="242"/>
    </location>
</feature>
<feature type="strand" evidence="8">
    <location>
        <begin position="248"/>
        <end position="253"/>
    </location>
</feature>
<feature type="turn" evidence="8">
    <location>
        <begin position="255"/>
        <end position="257"/>
    </location>
</feature>
<feature type="strand" evidence="8">
    <location>
        <begin position="260"/>
        <end position="262"/>
    </location>
</feature>
<feature type="turn" evidence="8">
    <location>
        <begin position="267"/>
        <end position="269"/>
    </location>
</feature>
<feature type="helix" evidence="8">
    <location>
        <begin position="270"/>
        <end position="272"/>
    </location>
</feature>
<feature type="strand" evidence="8">
    <location>
        <begin position="275"/>
        <end position="277"/>
    </location>
</feature>
<feature type="helix" evidence="8">
    <location>
        <begin position="284"/>
        <end position="297"/>
    </location>
</feature>
<feature type="helix" evidence="8">
    <location>
        <begin position="305"/>
        <end position="308"/>
    </location>
</feature>
<feature type="helix" evidence="8">
    <location>
        <begin position="313"/>
        <end position="325"/>
    </location>
</feature>
<feature type="helix" evidence="8">
    <location>
        <begin position="328"/>
        <end position="341"/>
    </location>
</feature>
<feature type="helix" evidence="8">
    <location>
        <begin position="348"/>
        <end position="366"/>
    </location>
</feature>
<feature type="strand" evidence="9">
    <location>
        <begin position="368"/>
        <end position="370"/>
    </location>
</feature>
<feature type="helix" evidence="8">
    <location>
        <begin position="371"/>
        <end position="380"/>
    </location>
</feature>
<feature type="helix" evidence="8">
    <location>
        <begin position="393"/>
        <end position="401"/>
    </location>
</feature>
<feature type="helix" evidence="8">
    <location>
        <begin position="405"/>
        <end position="414"/>
    </location>
</feature>
<feature type="strand" evidence="8">
    <location>
        <begin position="422"/>
        <end position="424"/>
    </location>
</feature>
<feature type="strand" evidence="8">
    <location>
        <begin position="433"/>
        <end position="435"/>
    </location>
</feature>
<feature type="helix" evidence="8">
    <location>
        <begin position="439"/>
        <end position="449"/>
    </location>
</feature>
<feature type="helix" evidence="8">
    <location>
        <begin position="450"/>
        <end position="452"/>
    </location>
</feature>
<feature type="strand" evidence="8">
    <location>
        <begin position="454"/>
        <end position="458"/>
    </location>
</feature>
<feature type="helix" evidence="8">
    <location>
        <begin position="465"/>
        <end position="478"/>
    </location>
</feature>
<feature type="strand" evidence="8">
    <location>
        <begin position="483"/>
        <end position="488"/>
    </location>
</feature>
<feature type="helix" evidence="8">
    <location>
        <begin position="495"/>
        <end position="497"/>
    </location>
</feature>
<feature type="helix" evidence="8">
    <location>
        <begin position="501"/>
        <end position="513"/>
    </location>
</feature>
<feature type="strand" evidence="8">
    <location>
        <begin position="516"/>
        <end position="521"/>
    </location>
</feature>
<feature type="helix" evidence="8">
    <location>
        <begin position="524"/>
        <end position="543"/>
    </location>
</feature>
<feature type="helix" evidence="8">
    <location>
        <begin position="546"/>
        <end position="557"/>
    </location>
</feature>
<feature type="helix" evidence="8">
    <location>
        <begin position="561"/>
        <end position="563"/>
    </location>
</feature>
<feature type="helix" evidence="8">
    <location>
        <begin position="565"/>
        <end position="568"/>
    </location>
</feature>
<feature type="helix" evidence="8">
    <location>
        <begin position="571"/>
        <end position="582"/>
    </location>
</feature>
<feature type="helix" evidence="8">
    <location>
        <begin position="602"/>
        <end position="604"/>
    </location>
</feature>
<feature type="helix" evidence="8">
    <location>
        <begin position="608"/>
        <end position="621"/>
    </location>
</feature>
<feature type="strand" evidence="8">
    <location>
        <begin position="629"/>
        <end position="636"/>
    </location>
</feature>
<feature type="strand" evidence="8">
    <location>
        <begin position="642"/>
        <end position="647"/>
    </location>
</feature>
<feature type="strand" evidence="8">
    <location>
        <begin position="653"/>
        <end position="663"/>
    </location>
</feature>
<feature type="strand" evidence="8">
    <location>
        <begin position="669"/>
        <end position="678"/>
    </location>
</feature>
<feature type="helix" evidence="8">
    <location>
        <begin position="681"/>
        <end position="683"/>
    </location>
</feature>
<feature type="strand" evidence="10">
    <location>
        <begin position="684"/>
        <end position="687"/>
    </location>
</feature>
<feature type="helix" evidence="8">
    <location>
        <begin position="688"/>
        <end position="700"/>
    </location>
</feature>
<feature type="strand" evidence="8">
    <location>
        <begin position="703"/>
        <end position="709"/>
    </location>
</feature>
<feature type="helix" evidence="8">
    <location>
        <begin position="712"/>
        <end position="723"/>
    </location>
</feature>
<feature type="strand" evidence="8">
    <location>
        <begin position="726"/>
        <end position="733"/>
    </location>
</feature>
<feature type="turn" evidence="8">
    <location>
        <begin position="734"/>
        <end position="736"/>
    </location>
</feature>
<feature type="strand" evidence="8">
    <location>
        <begin position="737"/>
        <end position="742"/>
    </location>
</feature>
<feature type="helix" evidence="8">
    <location>
        <begin position="744"/>
        <end position="750"/>
    </location>
</feature>
<feature type="helix" evidence="8">
    <location>
        <begin position="756"/>
        <end position="763"/>
    </location>
</feature>
<comment type="function">
    <text evidence="2 3 4">Involved in the persistence and virulence of M.tuberculosis. Catalyzes the reversible formation of succinate and glyoxylate from isocitrate, a key step of the glyoxylate cycle, which operates as an anaplerotic route for replenishing the tricarboxylic acid cycle during growth on fatty acid substrates.</text>
</comment>
<comment type="catalytic activity">
    <reaction evidence="2 4">
        <text>D-threo-isocitrate = glyoxylate + succinate</text>
        <dbReference type="Rhea" id="RHEA:13245"/>
        <dbReference type="ChEBI" id="CHEBI:15562"/>
        <dbReference type="ChEBI" id="CHEBI:30031"/>
        <dbReference type="ChEBI" id="CHEBI:36655"/>
        <dbReference type="EC" id="4.1.3.1"/>
    </reaction>
</comment>
<comment type="cofactor">
    <cofactor evidence="1">
        <name>Mg(2+)</name>
        <dbReference type="ChEBI" id="CHEBI:18420"/>
    </cofactor>
</comment>
<comment type="activity regulation">
    <text evidence="2 3">Inhibited by itaconate, itaconic anhydride, bromopyruvate and 3-nitropropionate (3-NP), when M.tuberculosis grows on fatty acids, but not on glucose. Succinate at 5 mM inhibits the activity to approximately 50%.</text>
</comment>
<comment type="biophysicochemical properties">
    <kinetics>
        <KM evidence="4">1.2 mM for threo-DL-isocitrate (ICA) (at pH 6.8)</KM>
        <KM evidence="2">1.3 mM for threo-D-isocitrate (at pH 7.5 and 37 degrees Celsius)</KM>
        <Vmax evidence="2">0.41 umol/min/mg enzyme with threo-D-isocitrate as substrate (at pH 7.5 and 37 degrees Celsius)</Vmax>
        <text evidence="4">kcat is 1.38 sec(-1) for isocitrate lyase activity with threo-DL-isocitrate as substrate (at pH 6).</text>
    </kinetics>
</comment>
<comment type="pathway">
    <text evidence="7">Carbohydrate metabolism; glyoxylate cycle; (S)-malate from isocitrate: step 1/2.</text>
</comment>
<comment type="induction">
    <text evidence="2">Induced by palmitate, acetate and glucose. Repressed by succinate.</text>
</comment>
<comment type="disruption phenotype">
    <text evidence="3">Deletion of icl2 has a little effect on replication in media containing glycerol, glucose, short-chain fatty acids or long-chain fatty acids. Cells lacking icl2 have no discernible impact on the kinetics of M.tuberculosis growth and persistence. However deletion of both icl1 and icl2 eliminates growth on fatty acids but has little effect on use of carbohydrates. Cells lacking both genes are incapable of growth in mice and are rapidly eliminated from the lungs and spleen.</text>
</comment>
<comment type="similarity">
    <text evidence="6">Belongs to the isocitrate lyase/PEP mutase superfamily. Isocitrate lyase family.</text>
</comment>
<protein>
    <recommendedName>
        <fullName evidence="5">Isocitrate lyase 2</fullName>
        <shortName evidence="5">ICL2</shortName>
        <ecNumber evidence="2 4">4.1.3.1</ecNumber>
    </recommendedName>
    <alternativeName>
        <fullName evidence="5">Isocitrase</fullName>
    </alternativeName>
    <alternativeName>
        <fullName evidence="5">Isocitratase</fullName>
    </alternativeName>
</protein>
<keyword id="KW-0002">3D-structure</keyword>
<keyword id="KW-0329">Glyoxylate bypass</keyword>
<keyword id="KW-0456">Lyase</keyword>
<keyword id="KW-0460">Magnesium</keyword>
<keyword id="KW-0479">Metal-binding</keyword>
<keyword id="KW-1185">Reference proteome</keyword>
<keyword id="KW-0816">Tricarboxylic acid cycle</keyword>
<sequence>MAIAETDTEVHTPFEQDFEKDVAATQRYFDSSRFAGIIRLYTARQVVEQRGTIPVDHIVAREAAGAFYERLRELFAARKSITTFGPYSPGQAVSMKRMGIEAIYLGGWATSAKGSSTEDPGPDLASYPLSQVPDDAAVLVRALLTADRNQHYLRLQMSERQRAATPAYDFRPFIIADADTGHGGDPHVRNLIRRFVEVGVPGYHIEDQRPGTKKCGHQGGKVLVPSDEQIKRLNAARFQLDIMRVPGIIVARTDAEAANLIDSRADERDQPFLLGATKLDVPSYKSCFLAMVRRFYELGVKELNGHLLYALGDSEYAAAGGWLERQGIFGLVSDAVNAWREDGQQSIDGIFDQVESRFVAAWEDDAGLMTYGEAVADVLEFGQSEGEPIGMAPEEWRAFAARASLHAARAKAKELGADPPWDCELAKTPEGYYQIRGGIPYAIAKSLAAAPFADILWMETKTADLADARQFAEAIHAEFPDQMLAYNLSPSFNWDTTGMTDEEMRRFPEELGKMGFVFNFITYGGHQIDGVAAEEFATALRQDGMLALARLQRKMRLVESPYRTPQTLVGGPRSDAALAASSGRTATTKAMGKGSTQHQHLVQTEVPRKLLEEWLAMWSGHYQLKDKLRVQLRPQRAGSEVLELGIHGESDDKLANVIFQPIQDRRGRTILLVRDQNTFGAELRQKRLMTLIHLWLVHRFKAQAVHYVTPTDDNLYQTSKMKSHGIFTEVNQEVGEIIVAEVNHPRIAELLTPDRVALRKLITKEA</sequence>
<name>ACEA2_MYCTO</name>
<dbReference type="EC" id="4.1.3.1" evidence="2 4"/>
<dbReference type="EMBL" id="AE000516">
    <property type="protein sequence ID" value="AAK46238.2"/>
    <property type="molecule type" value="Genomic_DNA"/>
</dbReference>
<dbReference type="PDB" id="6EDW">
    <property type="method" value="X-ray"/>
    <property type="resolution" value="1.80 A"/>
    <property type="chains" value="A/B/C/D=1-766"/>
</dbReference>
<dbReference type="PDB" id="6EDZ">
    <property type="method" value="X-ray"/>
    <property type="resolution" value="2.67 A"/>
    <property type="chains" value="A/B/C/D=1-766"/>
</dbReference>
<dbReference type="PDB" id="6EE1">
    <property type="method" value="X-ray"/>
    <property type="resolution" value="2.36 A"/>
    <property type="chains" value="A/B/C/D=1-766"/>
</dbReference>
<dbReference type="PDBsum" id="6EDW"/>
<dbReference type="PDBsum" id="6EDZ"/>
<dbReference type="PDBsum" id="6EE1"/>
<dbReference type="SMR" id="Q8VJU4"/>
<dbReference type="KEGG" id="mtc:MT1966"/>
<dbReference type="HOGENOM" id="CLU_019214_1_0_11"/>
<dbReference type="UniPathway" id="UPA00703">
    <property type="reaction ID" value="UER00719"/>
</dbReference>
<dbReference type="Proteomes" id="UP000001020">
    <property type="component" value="Chromosome"/>
</dbReference>
<dbReference type="GO" id="GO:0004451">
    <property type="term" value="F:isocitrate lyase activity"/>
    <property type="evidence" value="ECO:0007669"/>
    <property type="project" value="UniProtKB-EC"/>
</dbReference>
<dbReference type="GO" id="GO:0046872">
    <property type="term" value="F:metal ion binding"/>
    <property type="evidence" value="ECO:0007669"/>
    <property type="project" value="UniProtKB-KW"/>
</dbReference>
<dbReference type="GO" id="GO:0006097">
    <property type="term" value="P:glyoxylate cycle"/>
    <property type="evidence" value="ECO:0007669"/>
    <property type="project" value="UniProtKB-UniPathway"/>
</dbReference>
<dbReference type="GO" id="GO:0006099">
    <property type="term" value="P:tricarboxylic acid cycle"/>
    <property type="evidence" value="ECO:0007669"/>
    <property type="project" value="UniProtKB-KW"/>
</dbReference>
<dbReference type="CDD" id="cd00377">
    <property type="entry name" value="ICL_PEPM"/>
    <property type="match status" value="1"/>
</dbReference>
<dbReference type="FunFam" id="3.20.20.60:FF:000024">
    <property type="entry name" value="Isocitrate lyase"/>
    <property type="match status" value="1"/>
</dbReference>
<dbReference type="Gene3D" id="1.10.10.850">
    <property type="match status" value="1"/>
</dbReference>
<dbReference type="Gene3D" id="3.20.20.60">
    <property type="entry name" value="Phosphoenolpyruvate-binding domains"/>
    <property type="match status" value="1"/>
</dbReference>
<dbReference type="InterPro" id="IPR039556">
    <property type="entry name" value="ICL/PEPM"/>
</dbReference>
<dbReference type="InterPro" id="IPR006254">
    <property type="entry name" value="Isocitrate_lyase"/>
</dbReference>
<dbReference type="InterPro" id="IPR018523">
    <property type="entry name" value="Isocitrate_lyase_ph_CS"/>
</dbReference>
<dbReference type="InterPro" id="IPR015813">
    <property type="entry name" value="Pyrv/PenolPyrv_kinase-like_dom"/>
</dbReference>
<dbReference type="InterPro" id="IPR040442">
    <property type="entry name" value="Pyrv_kinase-like_dom_sf"/>
</dbReference>
<dbReference type="PANTHER" id="PTHR21631:SF3">
    <property type="entry name" value="BIFUNCTIONAL GLYOXYLATE CYCLE PROTEIN"/>
    <property type="match status" value="1"/>
</dbReference>
<dbReference type="PANTHER" id="PTHR21631">
    <property type="entry name" value="ISOCITRATE LYASE/MALATE SYNTHASE"/>
    <property type="match status" value="1"/>
</dbReference>
<dbReference type="Pfam" id="PF00463">
    <property type="entry name" value="ICL"/>
    <property type="match status" value="2"/>
</dbReference>
<dbReference type="SUPFAM" id="SSF51621">
    <property type="entry name" value="Phosphoenolpyruvate/pyruvate domain"/>
    <property type="match status" value="1"/>
</dbReference>
<dbReference type="PROSITE" id="PS00161">
    <property type="entry name" value="ISOCITRATE_LYASE"/>
    <property type="match status" value="1"/>
</dbReference>
<organism>
    <name type="scientific">Mycobacterium tuberculosis (strain CDC 1551 / Oshkosh)</name>
    <dbReference type="NCBI Taxonomy" id="83331"/>
    <lineage>
        <taxon>Bacteria</taxon>
        <taxon>Bacillati</taxon>
        <taxon>Actinomycetota</taxon>
        <taxon>Actinomycetes</taxon>
        <taxon>Mycobacteriales</taxon>
        <taxon>Mycobacteriaceae</taxon>
        <taxon>Mycobacterium</taxon>
        <taxon>Mycobacterium tuberculosis complex</taxon>
    </lineage>
</organism>
<gene>
    <name type="primary">icl2</name>
    <name type="synonym">aceA-2</name>
    <name type="ordered locus">MT1966</name>
</gene>